<sequence>MSRFFATNYNYDETSSSSEEDLLSSSEELLSSSEEGELSDDSLFNDESESESDFDSDDSDAKPYGPDWFKKPEFRKGGNKFLKGASYSDSDESDEEDGKKVVKSAREKLLDEMQAVYDKIETAEMSDDWMTILNEFDSITRLLVRAQQQNFGIPKIFVKVVAQVEDLVSNSEQTEIKNKAVSKAFNTTKQRVKKIARENEALLAKFREDPQSFDKEDTVEPELPPLNEENKVFTGKGVNLSSLASASSEFSFMASLQIVNDSRGKKNSNQAELIKTLEELLNIAKTPYERILAYLTLIPTRLEESTNLSYQPIDQWKSTHDDLNKLFDILDENISSYQVTELAARNDDLETEPEPNANGIREILGSLLSFTERLDDEFKKSLLNIDPHSSDYLERLRDEQNMYNLLLRTQLYMEATIPEERQEQLLARAFVRRLDHIYYKSNKLISIIENSAWKAVPSSYKSKYIPFSGNADEEYCSQLVEGLSKSLANQDNVFLQKRATLSHIYYTALNGEFEVAKELLLKTKVQSNINKSDPSLQILFNRVVVQLGLSAFKLCKIEECHQILNELLASSHLREILGQQSLQRIASNSSSSSSSEDREKQCLPYHQHINLDLVDLVFMTSSLLIEIPQMTAYLTGIKTKKVPVYQKSVRRLVESFDKSFFHGPPESIKEHVLYAAKSMQKGDWKGCLEYLKSVKTWNLLPNSVEVLDNLTERIQIETMKTYVFTYRRFYEKISIKKFSELFSLPEDKIVTTMEKVIADLELNIKLDDNKTYIVIEKGDEVSKLEEVAVKLNKEIRATRERLNPSHHNHR</sequence>
<comment type="function">
    <text evidence="1">Component of the eukaryotic translation initiation factor 3 (eIF-3) complex, which is involved in protein synthesis of a specialized repertoire of mRNAs and, together with other initiation factors, stimulates binding of mRNA and methionyl-tRNAi to the 40S ribosome. The eIF-3 complex specifically targets and initiates translation of a subset of mRNAs involved in cell proliferation.</text>
</comment>
<comment type="subunit">
    <text evidence="1">Component of the eukaryotic translation initiation factor 3 (eIF-3) complex.</text>
</comment>
<comment type="subcellular location">
    <subcellularLocation>
        <location evidence="1">Cytoplasm</location>
    </subcellularLocation>
</comment>
<comment type="similarity">
    <text evidence="1">Belongs to the eIF-3 subunit C family.</text>
</comment>
<accession>Q6FIJ6</accession>
<name>EIF3C_CANGA</name>
<feature type="chain" id="PRO_0000364279" description="Eukaryotic translation initiation factor 3 subunit C">
    <location>
        <begin position="1"/>
        <end position="810"/>
    </location>
</feature>
<feature type="domain" description="PCI" evidence="2">
    <location>
        <begin position="605"/>
        <end position="780"/>
    </location>
</feature>
<feature type="region of interest" description="Disordered" evidence="3">
    <location>
        <begin position="1"/>
        <end position="98"/>
    </location>
</feature>
<feature type="compositionally biased region" description="Polar residues" evidence="3">
    <location>
        <begin position="1"/>
        <end position="11"/>
    </location>
</feature>
<feature type="compositionally biased region" description="Low complexity" evidence="3">
    <location>
        <begin position="12"/>
        <end position="33"/>
    </location>
</feature>
<feature type="compositionally biased region" description="Acidic residues" evidence="3">
    <location>
        <begin position="34"/>
        <end position="58"/>
    </location>
</feature>
<dbReference type="EMBL" id="CR380959">
    <property type="protein sequence ID" value="CAG62928.1"/>
    <property type="molecule type" value="Genomic_DNA"/>
</dbReference>
<dbReference type="RefSeq" id="XP_449948.1">
    <property type="nucleotide sequence ID" value="XM_449948.1"/>
</dbReference>
<dbReference type="SMR" id="Q6FIJ6"/>
<dbReference type="FunCoup" id="Q6FIJ6">
    <property type="interactions" value="1275"/>
</dbReference>
<dbReference type="STRING" id="284593.Q6FIJ6"/>
<dbReference type="EnsemblFungi" id="CAGL0M13893g-T">
    <property type="protein sequence ID" value="CAGL0M13893g-T-p1"/>
    <property type="gene ID" value="CAGL0M13893g"/>
</dbReference>
<dbReference type="KEGG" id="cgr:2891610"/>
<dbReference type="CGD" id="CAL0137483">
    <property type="gene designation" value="CAGL0M13893g"/>
</dbReference>
<dbReference type="VEuPathDB" id="FungiDB:CAGL0M13893g"/>
<dbReference type="eggNOG" id="KOG1076">
    <property type="taxonomic scope" value="Eukaryota"/>
</dbReference>
<dbReference type="HOGENOM" id="CLU_004304_0_2_1"/>
<dbReference type="InParanoid" id="Q6FIJ6"/>
<dbReference type="OMA" id="FRCGLIK"/>
<dbReference type="Proteomes" id="UP000002428">
    <property type="component" value="Chromosome M"/>
</dbReference>
<dbReference type="GO" id="GO:0010494">
    <property type="term" value="C:cytoplasmic stress granule"/>
    <property type="evidence" value="ECO:0007669"/>
    <property type="project" value="EnsemblFungi"/>
</dbReference>
<dbReference type="GO" id="GO:0016282">
    <property type="term" value="C:eukaryotic 43S preinitiation complex"/>
    <property type="evidence" value="ECO:0007669"/>
    <property type="project" value="UniProtKB-UniRule"/>
</dbReference>
<dbReference type="GO" id="GO:0033290">
    <property type="term" value="C:eukaryotic 48S preinitiation complex"/>
    <property type="evidence" value="ECO:0007669"/>
    <property type="project" value="UniProtKB-UniRule"/>
</dbReference>
<dbReference type="GO" id="GO:0005852">
    <property type="term" value="C:eukaryotic translation initiation factor 3 complex"/>
    <property type="evidence" value="ECO:0007669"/>
    <property type="project" value="UniProtKB-UniRule"/>
</dbReference>
<dbReference type="GO" id="GO:0043614">
    <property type="term" value="C:multi-eIF complex"/>
    <property type="evidence" value="ECO:0007669"/>
    <property type="project" value="EnsemblFungi"/>
</dbReference>
<dbReference type="GO" id="GO:0003723">
    <property type="term" value="F:RNA binding"/>
    <property type="evidence" value="ECO:0007669"/>
    <property type="project" value="InterPro"/>
</dbReference>
<dbReference type="GO" id="GO:0003743">
    <property type="term" value="F:translation initiation factor activity"/>
    <property type="evidence" value="ECO:0007669"/>
    <property type="project" value="UniProtKB-UniRule"/>
</dbReference>
<dbReference type="GO" id="GO:0031369">
    <property type="term" value="F:translation initiation factor binding"/>
    <property type="evidence" value="ECO:0007669"/>
    <property type="project" value="EnsemblFungi"/>
</dbReference>
<dbReference type="GO" id="GO:0001732">
    <property type="term" value="P:formation of cytoplasmic translation initiation complex"/>
    <property type="evidence" value="ECO:0007669"/>
    <property type="project" value="UniProtKB-UniRule"/>
</dbReference>
<dbReference type="HAMAP" id="MF_03002">
    <property type="entry name" value="eIF3c"/>
    <property type="match status" value="1"/>
</dbReference>
<dbReference type="InterPro" id="IPR027516">
    <property type="entry name" value="EIF3C"/>
</dbReference>
<dbReference type="InterPro" id="IPR008905">
    <property type="entry name" value="EIF3C_N_dom"/>
</dbReference>
<dbReference type="InterPro" id="IPR000717">
    <property type="entry name" value="PCI_dom"/>
</dbReference>
<dbReference type="PANTHER" id="PTHR13937">
    <property type="entry name" value="EUKARYOTIC TRANSLATION INITATION FACTOR 3, SUBUNIT 8 EIF3S8 -RELATED"/>
    <property type="match status" value="1"/>
</dbReference>
<dbReference type="PANTHER" id="PTHR13937:SF0">
    <property type="entry name" value="EUKARYOTIC TRANSLATION INITIATION FACTOR 3 SUBUNIT C-RELATED"/>
    <property type="match status" value="1"/>
</dbReference>
<dbReference type="Pfam" id="PF05470">
    <property type="entry name" value="eIF-3c_N"/>
    <property type="match status" value="2"/>
</dbReference>
<dbReference type="Pfam" id="PF01399">
    <property type="entry name" value="PCI"/>
    <property type="match status" value="1"/>
</dbReference>
<dbReference type="SMART" id="SM00088">
    <property type="entry name" value="PINT"/>
    <property type="match status" value="1"/>
</dbReference>
<dbReference type="PROSITE" id="PS50250">
    <property type="entry name" value="PCI"/>
    <property type="match status" value="1"/>
</dbReference>
<keyword id="KW-0963">Cytoplasm</keyword>
<keyword id="KW-0396">Initiation factor</keyword>
<keyword id="KW-0648">Protein biosynthesis</keyword>
<keyword id="KW-1185">Reference proteome</keyword>
<organism>
    <name type="scientific">Candida glabrata (strain ATCC 2001 / BCRC 20586 / JCM 3761 / NBRC 0622 / NRRL Y-65 / CBS 138)</name>
    <name type="common">Yeast</name>
    <name type="synonym">Nakaseomyces glabratus</name>
    <dbReference type="NCBI Taxonomy" id="284593"/>
    <lineage>
        <taxon>Eukaryota</taxon>
        <taxon>Fungi</taxon>
        <taxon>Dikarya</taxon>
        <taxon>Ascomycota</taxon>
        <taxon>Saccharomycotina</taxon>
        <taxon>Saccharomycetes</taxon>
        <taxon>Saccharomycetales</taxon>
        <taxon>Saccharomycetaceae</taxon>
        <taxon>Nakaseomyces</taxon>
    </lineage>
</organism>
<protein>
    <recommendedName>
        <fullName evidence="1">Eukaryotic translation initiation factor 3 subunit C</fullName>
        <shortName evidence="1">eIF3c</shortName>
    </recommendedName>
    <alternativeName>
        <fullName evidence="1">Eukaryotic translation initiation factor 3 93 kDa subunit homolog</fullName>
        <shortName evidence="1">eIF3 p93</shortName>
    </alternativeName>
    <alternativeName>
        <fullName evidence="1">Translation initiation factor eIF3, p93 subunit homolog</fullName>
    </alternativeName>
</protein>
<reference key="1">
    <citation type="journal article" date="2004" name="Nature">
        <title>Genome evolution in yeasts.</title>
        <authorList>
            <person name="Dujon B."/>
            <person name="Sherman D."/>
            <person name="Fischer G."/>
            <person name="Durrens P."/>
            <person name="Casaregola S."/>
            <person name="Lafontaine I."/>
            <person name="de Montigny J."/>
            <person name="Marck C."/>
            <person name="Neuveglise C."/>
            <person name="Talla E."/>
            <person name="Goffard N."/>
            <person name="Frangeul L."/>
            <person name="Aigle M."/>
            <person name="Anthouard V."/>
            <person name="Babour A."/>
            <person name="Barbe V."/>
            <person name="Barnay S."/>
            <person name="Blanchin S."/>
            <person name="Beckerich J.-M."/>
            <person name="Beyne E."/>
            <person name="Bleykasten C."/>
            <person name="Boisrame A."/>
            <person name="Boyer J."/>
            <person name="Cattolico L."/>
            <person name="Confanioleri F."/>
            <person name="de Daruvar A."/>
            <person name="Despons L."/>
            <person name="Fabre E."/>
            <person name="Fairhead C."/>
            <person name="Ferry-Dumazet H."/>
            <person name="Groppi A."/>
            <person name="Hantraye F."/>
            <person name="Hennequin C."/>
            <person name="Jauniaux N."/>
            <person name="Joyet P."/>
            <person name="Kachouri R."/>
            <person name="Kerrest A."/>
            <person name="Koszul R."/>
            <person name="Lemaire M."/>
            <person name="Lesur I."/>
            <person name="Ma L."/>
            <person name="Muller H."/>
            <person name="Nicaud J.-M."/>
            <person name="Nikolski M."/>
            <person name="Oztas S."/>
            <person name="Ozier-Kalogeropoulos O."/>
            <person name="Pellenz S."/>
            <person name="Potier S."/>
            <person name="Richard G.-F."/>
            <person name="Straub M.-L."/>
            <person name="Suleau A."/>
            <person name="Swennen D."/>
            <person name="Tekaia F."/>
            <person name="Wesolowski-Louvel M."/>
            <person name="Westhof E."/>
            <person name="Wirth B."/>
            <person name="Zeniou-Meyer M."/>
            <person name="Zivanovic Y."/>
            <person name="Bolotin-Fukuhara M."/>
            <person name="Thierry A."/>
            <person name="Bouchier C."/>
            <person name="Caudron B."/>
            <person name="Scarpelli C."/>
            <person name="Gaillardin C."/>
            <person name="Weissenbach J."/>
            <person name="Wincker P."/>
            <person name="Souciet J.-L."/>
        </authorList>
    </citation>
    <scope>NUCLEOTIDE SEQUENCE [LARGE SCALE GENOMIC DNA]</scope>
    <source>
        <strain>ATCC 2001 / BCRC 20586 / JCM 3761 / NBRC 0622 / NRRL Y-65 / CBS 138</strain>
    </source>
</reference>
<gene>
    <name evidence="1" type="primary">NIP1</name>
    <name type="ordered locus">CAGL0M13893g</name>
</gene>
<proteinExistence type="inferred from homology"/>
<evidence type="ECO:0000255" key="1">
    <source>
        <dbReference type="HAMAP-Rule" id="MF_03002"/>
    </source>
</evidence>
<evidence type="ECO:0000255" key="2">
    <source>
        <dbReference type="PROSITE-ProRule" id="PRU01185"/>
    </source>
</evidence>
<evidence type="ECO:0000256" key="3">
    <source>
        <dbReference type="SAM" id="MobiDB-lite"/>
    </source>
</evidence>